<organism>
    <name type="scientific">Rattus norvegicus</name>
    <name type="common">Rat</name>
    <dbReference type="NCBI Taxonomy" id="10116"/>
    <lineage>
        <taxon>Eukaryota</taxon>
        <taxon>Metazoa</taxon>
        <taxon>Chordata</taxon>
        <taxon>Craniata</taxon>
        <taxon>Vertebrata</taxon>
        <taxon>Euteleostomi</taxon>
        <taxon>Mammalia</taxon>
        <taxon>Eutheria</taxon>
        <taxon>Euarchontoglires</taxon>
        <taxon>Glires</taxon>
        <taxon>Rodentia</taxon>
        <taxon>Myomorpha</taxon>
        <taxon>Muroidea</taxon>
        <taxon>Muridae</taxon>
        <taxon>Murinae</taxon>
        <taxon>Rattus</taxon>
    </lineage>
</organism>
<sequence>MLFEGLELVSALATLAACLVSVTLLLAVSQQLWQLRWAATRDKSCKLPIPKGSMGFPLIGETGHWLLQGSGFQSSRREKYGNVFKTHLLGRPLIRVTGAENVRKILLGEHQLVSTEWPRSARVLLGPNTVANSIGDIHRNKRKVFSKIFSHEALESYLPKIQLVIQDTLRAWSSQPEAINVYQEAQRLTFRMAVRVLLGFSIPEEDLGNLFEVYQQFVENVFSLPVDLPFSGYRRGIQARQILQKGLEKAIREKLQCTQGKDYSDALDILIESSKEHGKEMTMQELKDGTLELIFAAYATTASASTSLIMQLLKHPAVLEKLREELRAQGLLHGGGCPCEGTLRLDMLSGLRYLDCVIKEVMRLFTPVSGGYRTVLQTFELDGFQIPKGWSVMYSIRDTHDTAPVFKDVNVFDPDRFSQARSEDKDGRFHYLPFGGGVRTCLGKHLAKLFLKVLAVELASTSRFELATRTFPRITLVPVLHPVDGLSVKFFGLDSNQNEILPETEAMLSATV</sequence>
<accession>G3V7X8</accession>
<accession>Q80YE5</accession>
<dbReference type="EC" id="1.14.13.-" evidence="3"/>
<dbReference type="EMBL" id="AY245532">
    <property type="protein sequence ID" value="AAO92253.1"/>
    <property type="molecule type" value="mRNA"/>
</dbReference>
<dbReference type="EMBL" id="CH473957">
    <property type="protein sequence ID" value="EDL91177.1"/>
    <property type="molecule type" value="Genomic_DNA"/>
</dbReference>
<dbReference type="RefSeq" id="NP_851601.2">
    <property type="nucleotide sequence ID" value="NM_181087.3"/>
</dbReference>
<dbReference type="SMR" id="G3V7X8"/>
<dbReference type="FunCoup" id="G3V7X8">
    <property type="interactions" value="11"/>
</dbReference>
<dbReference type="STRING" id="10116.ENSRNOP00000020505"/>
<dbReference type="iPTMnet" id="G3V7X8"/>
<dbReference type="PhosphoSitePlus" id="G3V7X8"/>
<dbReference type="PaxDb" id="10116-ENSRNOP00000020505"/>
<dbReference type="Ensembl" id="ENSRNOT00000020505.4">
    <property type="protein sequence ID" value="ENSRNOP00000020505.3"/>
    <property type="gene ID" value="ENSRNOG00000015076.4"/>
</dbReference>
<dbReference type="GeneID" id="312495"/>
<dbReference type="KEGG" id="rno:312495"/>
<dbReference type="AGR" id="RGD:631379"/>
<dbReference type="CTD" id="56603"/>
<dbReference type="RGD" id="631379">
    <property type="gene designation" value="Cyp26b1"/>
</dbReference>
<dbReference type="eggNOG" id="KOG0157">
    <property type="taxonomic scope" value="Eukaryota"/>
</dbReference>
<dbReference type="GeneTree" id="ENSGT00800000124060"/>
<dbReference type="HOGENOM" id="CLU_001570_15_6_1"/>
<dbReference type="InParanoid" id="G3V7X8"/>
<dbReference type="OMA" id="WDGQFVN"/>
<dbReference type="OrthoDB" id="1372046at2759"/>
<dbReference type="PhylomeDB" id="G3V7X8"/>
<dbReference type="TreeFam" id="TF105093"/>
<dbReference type="Reactome" id="R-RNO-211916">
    <property type="pathway name" value="Vitamins"/>
</dbReference>
<dbReference type="Reactome" id="R-RNO-5365859">
    <property type="pathway name" value="RA biosynthesis pathway"/>
</dbReference>
<dbReference type="PRO" id="PR:G3V7X8"/>
<dbReference type="Proteomes" id="UP000002494">
    <property type="component" value="Chromosome 4"/>
</dbReference>
<dbReference type="Proteomes" id="UP000234681">
    <property type="component" value="Chromosome 4"/>
</dbReference>
<dbReference type="Bgee" id="ENSRNOG00000015076">
    <property type="expression patterns" value="Expressed in testis and 18 other cell types or tissues"/>
</dbReference>
<dbReference type="GO" id="GO:0005737">
    <property type="term" value="C:cytoplasm"/>
    <property type="evidence" value="ECO:0000266"/>
    <property type="project" value="RGD"/>
</dbReference>
<dbReference type="GO" id="GO:0005789">
    <property type="term" value="C:endoplasmic reticulum membrane"/>
    <property type="evidence" value="ECO:0007669"/>
    <property type="project" value="UniProtKB-SubCell"/>
</dbReference>
<dbReference type="GO" id="GO:0062183">
    <property type="term" value="F:all-trans retinoic acid 18-hydroxylase activity"/>
    <property type="evidence" value="ECO:0007669"/>
    <property type="project" value="RHEA"/>
</dbReference>
<dbReference type="GO" id="GO:0020037">
    <property type="term" value="F:heme binding"/>
    <property type="evidence" value="ECO:0007669"/>
    <property type="project" value="InterPro"/>
</dbReference>
<dbReference type="GO" id="GO:0005506">
    <property type="term" value="F:iron ion binding"/>
    <property type="evidence" value="ECO:0007669"/>
    <property type="project" value="InterPro"/>
</dbReference>
<dbReference type="GO" id="GO:0004497">
    <property type="term" value="F:monooxygenase activity"/>
    <property type="evidence" value="ECO:0000318"/>
    <property type="project" value="GO_Central"/>
</dbReference>
<dbReference type="GO" id="GO:0016709">
    <property type="term" value="F:oxidoreductase activity, acting on paired donors, with incorporation or reduction of molecular oxygen, NAD(P)H as one donor, and incorporation of one atom of oxygen"/>
    <property type="evidence" value="ECO:0000250"/>
    <property type="project" value="UniProtKB"/>
</dbReference>
<dbReference type="GO" id="GO:0008401">
    <property type="term" value="F:retinoic acid 4-hydroxylase activity"/>
    <property type="evidence" value="ECO:0000315"/>
    <property type="project" value="RGD"/>
</dbReference>
<dbReference type="GO" id="GO:0001972">
    <property type="term" value="F:retinoic acid binding"/>
    <property type="evidence" value="ECO:0000266"/>
    <property type="project" value="RGD"/>
</dbReference>
<dbReference type="GO" id="GO:0060349">
    <property type="term" value="P:bone morphogenesis"/>
    <property type="evidence" value="ECO:0000266"/>
    <property type="project" value="RGD"/>
</dbReference>
<dbReference type="GO" id="GO:0001709">
    <property type="term" value="P:cell fate determination"/>
    <property type="evidence" value="ECO:0000266"/>
    <property type="project" value="RGD"/>
</dbReference>
<dbReference type="GO" id="GO:0071300">
    <property type="term" value="P:cellular response to retinoic acid"/>
    <property type="evidence" value="ECO:0000266"/>
    <property type="project" value="RGD"/>
</dbReference>
<dbReference type="GO" id="GO:0007417">
    <property type="term" value="P:central nervous system development"/>
    <property type="evidence" value="ECO:0000318"/>
    <property type="project" value="GO_Central"/>
</dbReference>
<dbReference type="GO" id="GO:0070268">
    <property type="term" value="P:cornification"/>
    <property type="evidence" value="ECO:0000266"/>
    <property type="project" value="RGD"/>
</dbReference>
<dbReference type="GO" id="GO:0030326">
    <property type="term" value="P:embryonic limb morphogenesis"/>
    <property type="evidence" value="ECO:0000266"/>
    <property type="project" value="RGD"/>
</dbReference>
<dbReference type="GO" id="GO:0061436">
    <property type="term" value="P:establishment of skin barrier"/>
    <property type="evidence" value="ECO:0000266"/>
    <property type="project" value="RGD"/>
</dbReference>
<dbReference type="GO" id="GO:0001768">
    <property type="term" value="P:establishment of T cell polarity"/>
    <property type="evidence" value="ECO:0000266"/>
    <property type="project" value="RGD"/>
</dbReference>
<dbReference type="GO" id="GO:0006954">
    <property type="term" value="P:inflammatory response"/>
    <property type="evidence" value="ECO:0000266"/>
    <property type="project" value="RGD"/>
</dbReference>
<dbReference type="GO" id="GO:0001822">
    <property type="term" value="P:kidney development"/>
    <property type="evidence" value="ECO:0000270"/>
    <property type="project" value="RGD"/>
</dbReference>
<dbReference type="GO" id="GO:0007140">
    <property type="term" value="P:male meiotic nuclear division"/>
    <property type="evidence" value="ECO:0000266"/>
    <property type="project" value="RGD"/>
</dbReference>
<dbReference type="GO" id="GO:0048387">
    <property type="term" value="P:negative regulation of retinoic acid receptor signaling pathway"/>
    <property type="evidence" value="ECO:0000266"/>
    <property type="project" value="RGD"/>
</dbReference>
<dbReference type="GO" id="GO:0010628">
    <property type="term" value="P:positive regulation of gene expression"/>
    <property type="evidence" value="ECO:0000266"/>
    <property type="project" value="RGD"/>
</dbReference>
<dbReference type="GO" id="GO:2001037">
    <property type="term" value="P:positive regulation of tongue muscle cell differentiation"/>
    <property type="evidence" value="ECO:0000266"/>
    <property type="project" value="RGD"/>
</dbReference>
<dbReference type="GO" id="GO:0009954">
    <property type="term" value="P:proximal/distal pattern formation"/>
    <property type="evidence" value="ECO:0000266"/>
    <property type="project" value="RGD"/>
</dbReference>
<dbReference type="GO" id="GO:0048385">
    <property type="term" value="P:regulation of retinoic acid receptor signaling pathway"/>
    <property type="evidence" value="ECO:0000266"/>
    <property type="project" value="RGD"/>
</dbReference>
<dbReference type="GO" id="GO:0045580">
    <property type="term" value="P:regulation of T cell differentiation"/>
    <property type="evidence" value="ECO:0000266"/>
    <property type="project" value="RGD"/>
</dbReference>
<dbReference type="GO" id="GO:0032526">
    <property type="term" value="P:response to retinoic acid"/>
    <property type="evidence" value="ECO:0000270"/>
    <property type="project" value="RGD"/>
</dbReference>
<dbReference type="GO" id="GO:0033189">
    <property type="term" value="P:response to vitamin A"/>
    <property type="evidence" value="ECO:0000270"/>
    <property type="project" value="RGD"/>
</dbReference>
<dbReference type="GO" id="GO:0034653">
    <property type="term" value="P:retinoic acid catabolic process"/>
    <property type="evidence" value="ECO:0000315"/>
    <property type="project" value="RGD"/>
</dbReference>
<dbReference type="GO" id="GO:0042573">
    <property type="term" value="P:retinoic acid metabolic process"/>
    <property type="evidence" value="ECO:0000250"/>
    <property type="project" value="UniProtKB"/>
</dbReference>
<dbReference type="GO" id="GO:0048384">
    <property type="term" value="P:retinoic acid receptor signaling pathway"/>
    <property type="evidence" value="ECO:0000266"/>
    <property type="project" value="RGD"/>
</dbReference>
<dbReference type="GO" id="GO:0007283">
    <property type="term" value="P:spermatogenesis"/>
    <property type="evidence" value="ECO:0000266"/>
    <property type="project" value="RGD"/>
</dbReference>
<dbReference type="GO" id="GO:0043587">
    <property type="term" value="P:tongue morphogenesis"/>
    <property type="evidence" value="ECO:0000266"/>
    <property type="project" value="RGD"/>
</dbReference>
<dbReference type="GO" id="GO:0006805">
    <property type="term" value="P:xenobiotic metabolic process"/>
    <property type="evidence" value="ECO:0000250"/>
    <property type="project" value="UniProtKB"/>
</dbReference>
<dbReference type="CDD" id="cd20637">
    <property type="entry name" value="CYP26B1"/>
    <property type="match status" value="1"/>
</dbReference>
<dbReference type="FunFam" id="1.10.630.10:FF:000009">
    <property type="entry name" value="Cytochrome P450 26B1 isoform 1"/>
    <property type="match status" value="1"/>
</dbReference>
<dbReference type="Gene3D" id="1.10.630.10">
    <property type="entry name" value="Cytochrome P450"/>
    <property type="match status" value="1"/>
</dbReference>
<dbReference type="InterPro" id="IPR001128">
    <property type="entry name" value="Cyt_P450"/>
</dbReference>
<dbReference type="InterPro" id="IPR017972">
    <property type="entry name" value="Cyt_P450_CS"/>
</dbReference>
<dbReference type="InterPro" id="IPR002403">
    <property type="entry name" value="Cyt_P450_E_grp-IV"/>
</dbReference>
<dbReference type="InterPro" id="IPR036396">
    <property type="entry name" value="Cyt_P450_sf"/>
</dbReference>
<dbReference type="PANTHER" id="PTHR24286">
    <property type="entry name" value="CYTOCHROME P450 26"/>
    <property type="match status" value="1"/>
</dbReference>
<dbReference type="PANTHER" id="PTHR24286:SF177">
    <property type="entry name" value="CYTOCHROME P450 26B1"/>
    <property type="match status" value="1"/>
</dbReference>
<dbReference type="Pfam" id="PF00067">
    <property type="entry name" value="p450"/>
    <property type="match status" value="1"/>
</dbReference>
<dbReference type="PRINTS" id="PR00465">
    <property type="entry name" value="EP450IV"/>
</dbReference>
<dbReference type="PRINTS" id="PR00385">
    <property type="entry name" value="P450"/>
</dbReference>
<dbReference type="SUPFAM" id="SSF48264">
    <property type="entry name" value="Cytochrome P450"/>
    <property type="match status" value="1"/>
</dbReference>
<dbReference type="PROSITE" id="PS00086">
    <property type="entry name" value="CYTOCHROME_P450"/>
    <property type="match status" value="1"/>
</dbReference>
<protein>
    <recommendedName>
        <fullName>Cytochrome P450 26B1</fullName>
        <ecNumber evidence="3">1.14.13.-</ecNumber>
    </recommendedName>
</protein>
<gene>
    <name type="primary">Cyp26b1</name>
</gene>
<keyword id="KW-0256">Endoplasmic reticulum</keyword>
<keyword id="KW-0349">Heme</keyword>
<keyword id="KW-0408">Iron</keyword>
<keyword id="KW-0443">Lipid metabolism</keyword>
<keyword id="KW-0472">Membrane</keyword>
<keyword id="KW-0479">Metal-binding</keyword>
<keyword id="KW-0492">Microsome</keyword>
<keyword id="KW-0503">Monooxygenase</keyword>
<keyword id="KW-0560">Oxidoreductase</keyword>
<keyword id="KW-1185">Reference proteome</keyword>
<feature type="chain" id="PRO_0000416906" description="Cytochrome P450 26B1">
    <location>
        <begin position="1"/>
        <end position="512"/>
    </location>
</feature>
<feature type="binding site" description="axial binding residue" evidence="5">
    <location>
        <position position="441"/>
    </location>
    <ligand>
        <name>heme</name>
        <dbReference type="ChEBI" id="CHEBI:30413"/>
    </ligand>
    <ligandPart>
        <name>Fe</name>
        <dbReference type="ChEBI" id="CHEBI:18248"/>
    </ligandPart>
</feature>
<feature type="sequence conflict" description="In Ref. 1; AAO92253." evidence="6" ref="1">
    <original>I</original>
    <variation>V</variation>
    <location>
        <position position="251"/>
    </location>
</feature>
<comment type="function">
    <text evidence="2 3">A cytochrome P450 monooxygenase involved in the metabolism of retinoates (RAs), the active metabolites of vitamin A, and critical signaling molecules in animals (By similarity). RAs exist as at least four different isomers: all-trans-RA (atRA), 9-cis-RA, 13-cis-RA, and 9,13-dicis-RA, where atRA is considered to be the biologically active isomer, although 9-cis-RA and 13-cis-RA also have activity (By similarity). Catalyzes the hydroxylation of atRA primarily at C-4 and C-18, thereby contributing to the regulation of atRA homeostasis and signaling (By similarity). Hydroxylation of atRA limits its biological activity and initiates a degradative process leading to its eventual elimination (By similarity). Involved in the convertion of atRA to all-trans-4-oxo-RA. Can oxidize all-trans-13,14-dihydroretinoate (DRA) to metabolites which could include all-trans-4-oxo-DRA, all-trans-4-hydroxy-DRA, all-trans-5,8-epoxy-DRA, and all-trans-18-hydroxy-DRA (By similarity). Shows preference for the following substrates: atRA &gt; 9-cis-RA &gt; 13-cis-RA (By similarity). Plays a central role in germ cell development: acts by degrading RAs in the developing testis, preventing STRA8 expression, thereby leading to delay of meiosis. Required for the maintenance of the undifferentiated state of male germ cells during embryonic development in Sertoli cells, inducing arrest in G0 phase of the cell cycle and preventing meiotic entry. Plays a role in skeletal development, both at the level of patterning and in the ossification of bone and the establishment of some synovial joints. Essential for postnatal survival (By similarity).</text>
</comment>
<comment type="function">
    <text evidence="3">Also has a significant activity in oxidation of tazarotenic acid and may therefore metabolize that xenobiotic in vivo.</text>
</comment>
<comment type="catalytic activity">
    <reaction evidence="2">
        <text>all-trans-retinoate + reduced [NADPH--hemoprotein reductase] + O2 = all-trans-4-hydroxyretinoate + oxidized [NADPH--hemoprotein reductase] + H2O + H(+)</text>
        <dbReference type="Rhea" id="RHEA:51984"/>
        <dbReference type="Rhea" id="RHEA-COMP:11964"/>
        <dbReference type="Rhea" id="RHEA-COMP:11965"/>
        <dbReference type="ChEBI" id="CHEBI:15377"/>
        <dbReference type="ChEBI" id="CHEBI:15378"/>
        <dbReference type="ChEBI" id="CHEBI:15379"/>
        <dbReference type="ChEBI" id="CHEBI:35291"/>
        <dbReference type="ChEBI" id="CHEBI:57618"/>
        <dbReference type="ChEBI" id="CHEBI:58210"/>
        <dbReference type="ChEBI" id="CHEBI:134178"/>
    </reaction>
    <physiologicalReaction direction="left-to-right" evidence="2">
        <dbReference type="Rhea" id="RHEA:51985"/>
    </physiologicalReaction>
</comment>
<comment type="catalytic activity">
    <reaction evidence="2">
        <text>all-trans-retinoate + reduced [NADPH--hemoprotein reductase] + O2 = all-trans-18-hydroxyretinoate + oxidized [NADPH--hemoprotein reductase] + H2O + H(+)</text>
        <dbReference type="Rhea" id="RHEA:55856"/>
        <dbReference type="Rhea" id="RHEA-COMP:11964"/>
        <dbReference type="Rhea" id="RHEA-COMP:11965"/>
        <dbReference type="ChEBI" id="CHEBI:15377"/>
        <dbReference type="ChEBI" id="CHEBI:15378"/>
        <dbReference type="ChEBI" id="CHEBI:15379"/>
        <dbReference type="ChEBI" id="CHEBI:35291"/>
        <dbReference type="ChEBI" id="CHEBI:57618"/>
        <dbReference type="ChEBI" id="CHEBI:58210"/>
        <dbReference type="ChEBI" id="CHEBI:139258"/>
    </reaction>
    <physiologicalReaction direction="left-to-right" evidence="2">
        <dbReference type="Rhea" id="RHEA:55857"/>
    </physiologicalReaction>
</comment>
<comment type="cofactor">
    <cofactor evidence="4">
        <name>heme</name>
        <dbReference type="ChEBI" id="CHEBI:30413"/>
    </cofactor>
</comment>
<comment type="subcellular location">
    <subcellularLocation>
        <location evidence="1">Endoplasmic reticulum membrane</location>
        <topology evidence="1">Peripheral membrane protein</topology>
    </subcellularLocation>
    <subcellularLocation>
        <location evidence="1">Microsome membrane</location>
        <topology evidence="1">Peripheral membrane protein</topology>
    </subcellularLocation>
</comment>
<comment type="similarity">
    <text evidence="6">Belongs to the cytochrome P450 family.</text>
</comment>
<name>CP26B_RAT</name>
<proteinExistence type="evidence at transcript level"/>
<evidence type="ECO:0000250" key="1">
    <source>
        <dbReference type="UniProtKB" id="O43174"/>
    </source>
</evidence>
<evidence type="ECO:0000250" key="2">
    <source>
        <dbReference type="UniProtKB" id="Q811W2"/>
    </source>
</evidence>
<evidence type="ECO:0000250" key="3">
    <source>
        <dbReference type="UniProtKB" id="Q9NR63"/>
    </source>
</evidence>
<evidence type="ECO:0000250" key="4">
    <source>
        <dbReference type="UniProtKB" id="Q9Y6A2"/>
    </source>
</evidence>
<evidence type="ECO:0000255" key="5"/>
<evidence type="ECO:0000305" key="6"/>
<reference key="1">
    <citation type="submission" date="2003-04" db="EMBL/GenBank/DDBJ databases">
        <title>Retinoic acid-induced genes in glioma cells transformed to normal phenotypic reversion.</title>
        <authorList>
            <person name="Bengtson M.H."/>
            <person name="Rodrigues L.O."/>
            <person name="Colin C."/>
            <person name="Hasegawa A.P."/>
            <person name="Maria-Engler S.S."/>
            <person name="Sogayar M.C."/>
        </authorList>
    </citation>
    <scope>NUCLEOTIDE SEQUENCE [MRNA]</scope>
    <source>
        <strain>Sprague-Dawley</strain>
    </source>
</reference>
<reference key="2">
    <citation type="journal article" date="2004" name="Nature">
        <title>Genome sequence of the Brown Norway rat yields insights into mammalian evolution.</title>
        <authorList>
            <person name="Gibbs R.A."/>
            <person name="Weinstock G.M."/>
            <person name="Metzker M.L."/>
            <person name="Muzny D.M."/>
            <person name="Sodergren E.J."/>
            <person name="Scherer S."/>
            <person name="Scott G."/>
            <person name="Steffen D."/>
            <person name="Worley K.C."/>
            <person name="Burch P.E."/>
            <person name="Okwuonu G."/>
            <person name="Hines S."/>
            <person name="Lewis L."/>
            <person name="Deramo C."/>
            <person name="Delgado O."/>
            <person name="Dugan-Rocha S."/>
            <person name="Miner G."/>
            <person name="Morgan M."/>
            <person name="Hawes A."/>
            <person name="Gill R."/>
            <person name="Holt R.A."/>
            <person name="Adams M.D."/>
            <person name="Amanatides P.G."/>
            <person name="Baden-Tillson H."/>
            <person name="Barnstead M."/>
            <person name="Chin S."/>
            <person name="Evans C.A."/>
            <person name="Ferriera S."/>
            <person name="Fosler C."/>
            <person name="Glodek A."/>
            <person name="Gu Z."/>
            <person name="Jennings D."/>
            <person name="Kraft C.L."/>
            <person name="Nguyen T."/>
            <person name="Pfannkoch C.M."/>
            <person name="Sitter C."/>
            <person name="Sutton G.G."/>
            <person name="Venter J.C."/>
            <person name="Woodage T."/>
            <person name="Smith D."/>
            <person name="Lee H.-M."/>
            <person name="Gustafson E."/>
            <person name="Cahill P."/>
            <person name="Kana A."/>
            <person name="Doucette-Stamm L."/>
            <person name="Weinstock K."/>
            <person name="Fechtel K."/>
            <person name="Weiss R.B."/>
            <person name="Dunn D.M."/>
            <person name="Green E.D."/>
            <person name="Blakesley R.W."/>
            <person name="Bouffard G.G."/>
            <person name="De Jong P.J."/>
            <person name="Osoegawa K."/>
            <person name="Zhu B."/>
            <person name="Marra M."/>
            <person name="Schein J."/>
            <person name="Bosdet I."/>
            <person name="Fjell C."/>
            <person name="Jones S."/>
            <person name="Krzywinski M."/>
            <person name="Mathewson C."/>
            <person name="Siddiqui A."/>
            <person name="Wye N."/>
            <person name="McPherson J."/>
            <person name="Zhao S."/>
            <person name="Fraser C.M."/>
            <person name="Shetty J."/>
            <person name="Shatsman S."/>
            <person name="Geer K."/>
            <person name="Chen Y."/>
            <person name="Abramzon S."/>
            <person name="Nierman W.C."/>
            <person name="Havlak P.H."/>
            <person name="Chen R."/>
            <person name="Durbin K.J."/>
            <person name="Egan A."/>
            <person name="Ren Y."/>
            <person name="Song X.-Z."/>
            <person name="Li B."/>
            <person name="Liu Y."/>
            <person name="Qin X."/>
            <person name="Cawley S."/>
            <person name="Cooney A.J."/>
            <person name="D'Souza L.M."/>
            <person name="Martin K."/>
            <person name="Wu J.Q."/>
            <person name="Gonzalez-Garay M.L."/>
            <person name="Jackson A.R."/>
            <person name="Kalafus K.J."/>
            <person name="McLeod M.P."/>
            <person name="Milosavljevic A."/>
            <person name="Virk D."/>
            <person name="Volkov A."/>
            <person name="Wheeler D.A."/>
            <person name="Zhang Z."/>
            <person name="Bailey J.A."/>
            <person name="Eichler E.E."/>
            <person name="Tuzun E."/>
            <person name="Birney E."/>
            <person name="Mongin E."/>
            <person name="Ureta-Vidal A."/>
            <person name="Woodwark C."/>
            <person name="Zdobnov E."/>
            <person name="Bork P."/>
            <person name="Suyama M."/>
            <person name="Torrents D."/>
            <person name="Alexandersson M."/>
            <person name="Trask B.J."/>
            <person name="Young J.M."/>
            <person name="Huang H."/>
            <person name="Wang H."/>
            <person name="Xing H."/>
            <person name="Daniels S."/>
            <person name="Gietzen D."/>
            <person name="Schmidt J."/>
            <person name="Stevens K."/>
            <person name="Vitt U."/>
            <person name="Wingrove J."/>
            <person name="Camara F."/>
            <person name="Mar Alba M."/>
            <person name="Abril J.F."/>
            <person name="Guigo R."/>
            <person name="Smit A."/>
            <person name="Dubchak I."/>
            <person name="Rubin E.M."/>
            <person name="Couronne O."/>
            <person name="Poliakov A."/>
            <person name="Huebner N."/>
            <person name="Ganten D."/>
            <person name="Goesele C."/>
            <person name="Hummel O."/>
            <person name="Kreitler T."/>
            <person name="Lee Y.-A."/>
            <person name="Monti J."/>
            <person name="Schulz H."/>
            <person name="Zimdahl H."/>
            <person name="Himmelbauer H."/>
            <person name="Lehrach H."/>
            <person name="Jacob H.J."/>
            <person name="Bromberg S."/>
            <person name="Gullings-Handley J."/>
            <person name="Jensen-Seaman M.I."/>
            <person name="Kwitek A.E."/>
            <person name="Lazar J."/>
            <person name="Pasko D."/>
            <person name="Tonellato P.J."/>
            <person name="Twigger S."/>
            <person name="Ponting C.P."/>
            <person name="Duarte J.M."/>
            <person name="Rice S."/>
            <person name="Goodstadt L."/>
            <person name="Beatson S.A."/>
            <person name="Emes R.D."/>
            <person name="Winter E.E."/>
            <person name="Webber C."/>
            <person name="Brandt P."/>
            <person name="Nyakatura G."/>
            <person name="Adetobi M."/>
            <person name="Chiaromonte F."/>
            <person name="Elnitski L."/>
            <person name="Eswara P."/>
            <person name="Hardison R.C."/>
            <person name="Hou M."/>
            <person name="Kolbe D."/>
            <person name="Makova K."/>
            <person name="Miller W."/>
            <person name="Nekrutenko A."/>
            <person name="Riemer C."/>
            <person name="Schwartz S."/>
            <person name="Taylor J."/>
            <person name="Yang S."/>
            <person name="Zhang Y."/>
            <person name="Lindpaintner K."/>
            <person name="Andrews T.D."/>
            <person name="Caccamo M."/>
            <person name="Clamp M."/>
            <person name="Clarke L."/>
            <person name="Curwen V."/>
            <person name="Durbin R.M."/>
            <person name="Eyras E."/>
            <person name="Searle S.M."/>
            <person name="Cooper G.M."/>
            <person name="Batzoglou S."/>
            <person name="Brudno M."/>
            <person name="Sidow A."/>
            <person name="Stone E.A."/>
            <person name="Payseur B.A."/>
            <person name="Bourque G."/>
            <person name="Lopez-Otin C."/>
            <person name="Puente X.S."/>
            <person name="Chakrabarti K."/>
            <person name="Chatterji S."/>
            <person name="Dewey C."/>
            <person name="Pachter L."/>
            <person name="Bray N."/>
            <person name="Yap V.B."/>
            <person name="Caspi A."/>
            <person name="Tesler G."/>
            <person name="Pevzner P.A."/>
            <person name="Haussler D."/>
            <person name="Roskin K.M."/>
            <person name="Baertsch R."/>
            <person name="Clawson H."/>
            <person name="Furey T.S."/>
            <person name="Hinrichs A.S."/>
            <person name="Karolchik D."/>
            <person name="Kent W.J."/>
            <person name="Rosenbloom K.R."/>
            <person name="Trumbower H."/>
            <person name="Weirauch M."/>
            <person name="Cooper D.N."/>
            <person name="Stenson P.D."/>
            <person name="Ma B."/>
            <person name="Brent M."/>
            <person name="Arumugam M."/>
            <person name="Shteynberg D."/>
            <person name="Copley R.R."/>
            <person name="Taylor M.S."/>
            <person name="Riethman H."/>
            <person name="Mudunuri U."/>
            <person name="Peterson J."/>
            <person name="Guyer M."/>
            <person name="Felsenfeld A."/>
            <person name="Old S."/>
            <person name="Mockrin S."/>
            <person name="Collins F.S."/>
        </authorList>
    </citation>
    <scope>NUCLEOTIDE SEQUENCE [LARGE SCALE GENOMIC DNA]</scope>
    <source>
        <strain>Brown Norway</strain>
    </source>
</reference>
<reference key="3">
    <citation type="submission" date="2005-07" db="EMBL/GenBank/DDBJ databases">
        <authorList>
            <person name="Mural R.J."/>
            <person name="Adams M.D."/>
            <person name="Myers E.W."/>
            <person name="Smith H.O."/>
            <person name="Venter J.C."/>
        </authorList>
    </citation>
    <scope>NUCLEOTIDE SEQUENCE [LARGE SCALE GENOMIC DNA]</scope>
    <source>
        <strain>Brown Norway</strain>
    </source>
</reference>